<reference key="1">
    <citation type="submission" date="1989-03" db="EMBL/GenBank/DDBJ databases">
        <authorList>
            <person name="Neumann H."/>
        </authorList>
    </citation>
    <scope>NUCLEOTIDE SEQUENCE [GENOMIC DNA]</scope>
</reference>
<proteinExistence type="predicted"/>
<organismHost>
    <name type="scientific">Thermoproteus tenax</name>
    <dbReference type="NCBI Taxonomy" id="2271"/>
</organismHost>
<feature type="chain" id="PRO_0000222973" description="Uncharacterized 7.1 kDa protein">
    <location>
        <begin position="1"/>
        <end position="63"/>
    </location>
</feature>
<dbReference type="EMBL" id="X14855">
    <property type="protein sequence ID" value="CAA32985.1"/>
    <property type="molecule type" value="Genomic_DNA"/>
</dbReference>
<dbReference type="SMR" id="P19291"/>
<dbReference type="Proteomes" id="UP000009250">
    <property type="component" value="Genome"/>
</dbReference>
<organism>
    <name type="scientific">Thermoproteus tenax virus 1 (strain KRA1)</name>
    <name type="common">TTV1</name>
    <dbReference type="NCBI Taxonomy" id="10480"/>
    <lineage>
        <taxon>Viruses</taxon>
        <taxon>Adnaviria</taxon>
        <taxon>Zilligvirae</taxon>
        <taxon>Taleaviricota</taxon>
        <taxon>Tokiviricetes</taxon>
        <taxon>Primavirales</taxon>
        <taxon>Tristromaviridae</taxon>
        <taxon>Betatristromavirus</taxon>
        <taxon>Betatristromavirus TTV1</taxon>
    </lineage>
</organism>
<protein>
    <recommendedName>
        <fullName>Uncharacterized 7.1 kDa protein</fullName>
    </recommendedName>
</protein>
<keyword id="KW-1185">Reference proteome</keyword>
<name>YORG_TTV1K</name>
<sequence>MLSNPSRHISRQSATDKRRLKSIKVYLGHAEVVVFNVSRRGQRISNRLSLNIAQFGQSLYLVG</sequence>
<accession>P19291</accession>